<name>RSMH_OLEA2</name>
<protein>
    <recommendedName>
        <fullName evidence="1">Ribosomal RNA small subunit methyltransferase H</fullName>
        <ecNumber evidence="1">2.1.1.199</ecNumber>
    </recommendedName>
    <alternativeName>
        <fullName evidence="1">16S rRNA m(4)C1402 methyltransferase</fullName>
    </alternativeName>
    <alternativeName>
        <fullName evidence="1">rRNA (cytosine-N(4)-)-methyltransferase RsmH</fullName>
    </alternativeName>
</protein>
<sequence>MTADNGHDNNRHQYTAHVPVLLDEVLHYLSPVRGGRYLDGTLGLGGHSEAIMNRCGGDAWLLGLDRDREALAAASGRLAPFGDRVTTRYACYSQFAAIMDEIGWTGLDGALIDIGVSSMQIDTPSRGFSFYADGPLDMRMDPSGDMPSAGVLVNTGSVERLKEIISTYGEDPMAGRIARAIVDARARNPIETTARLAEVVESAYPAKWRAKSRNHPATRTFQALRMAVNGELEELETFLAAIVDRMNPGGRIVVITFHSLEDRLVKNAFRDEAKGCLCPRHIPVCVCGKKPRVNVLTRKPVTAGQAELQANSRASSAKLRAAERI</sequence>
<feature type="chain" id="PRO_0000223542" description="Ribosomal RNA small subunit methyltransferase H">
    <location>
        <begin position="1"/>
        <end position="325"/>
    </location>
</feature>
<feature type="binding site" evidence="1">
    <location>
        <begin position="45"/>
        <end position="47"/>
    </location>
    <ligand>
        <name>S-adenosyl-L-methionine</name>
        <dbReference type="ChEBI" id="CHEBI:59789"/>
    </ligand>
</feature>
<feature type="binding site" evidence="1">
    <location>
        <position position="65"/>
    </location>
    <ligand>
        <name>S-adenosyl-L-methionine</name>
        <dbReference type="ChEBI" id="CHEBI:59789"/>
    </ligand>
</feature>
<feature type="binding site" evidence="1">
    <location>
        <position position="92"/>
    </location>
    <ligand>
        <name>S-adenosyl-L-methionine</name>
        <dbReference type="ChEBI" id="CHEBI:59789"/>
    </ligand>
</feature>
<feature type="binding site" evidence="1">
    <location>
        <position position="113"/>
    </location>
    <ligand>
        <name>S-adenosyl-L-methionine</name>
        <dbReference type="ChEBI" id="CHEBI:59789"/>
    </ligand>
</feature>
<feature type="binding site" evidence="1">
    <location>
        <position position="120"/>
    </location>
    <ligand>
        <name>S-adenosyl-L-methionine</name>
        <dbReference type="ChEBI" id="CHEBI:59789"/>
    </ligand>
</feature>
<keyword id="KW-0963">Cytoplasm</keyword>
<keyword id="KW-0489">Methyltransferase</keyword>
<keyword id="KW-1185">Reference proteome</keyword>
<keyword id="KW-0698">rRNA processing</keyword>
<keyword id="KW-0949">S-adenosyl-L-methionine</keyword>
<keyword id="KW-0808">Transferase</keyword>
<accession>Q313R1</accession>
<comment type="function">
    <text evidence="1">Specifically methylates the N4 position of cytidine in position 1402 (C1402) of 16S rRNA.</text>
</comment>
<comment type="catalytic activity">
    <reaction evidence="1">
        <text>cytidine(1402) in 16S rRNA + S-adenosyl-L-methionine = N(4)-methylcytidine(1402) in 16S rRNA + S-adenosyl-L-homocysteine + H(+)</text>
        <dbReference type="Rhea" id="RHEA:42928"/>
        <dbReference type="Rhea" id="RHEA-COMP:10286"/>
        <dbReference type="Rhea" id="RHEA-COMP:10287"/>
        <dbReference type="ChEBI" id="CHEBI:15378"/>
        <dbReference type="ChEBI" id="CHEBI:57856"/>
        <dbReference type="ChEBI" id="CHEBI:59789"/>
        <dbReference type="ChEBI" id="CHEBI:74506"/>
        <dbReference type="ChEBI" id="CHEBI:82748"/>
        <dbReference type="EC" id="2.1.1.199"/>
    </reaction>
</comment>
<comment type="subcellular location">
    <subcellularLocation>
        <location evidence="1">Cytoplasm</location>
    </subcellularLocation>
</comment>
<comment type="similarity">
    <text evidence="1">Belongs to the methyltransferase superfamily. RsmH family.</text>
</comment>
<gene>
    <name evidence="1" type="primary">rsmH</name>
    <name type="synonym">mraW</name>
    <name type="ordered locus">Dde_1034</name>
</gene>
<evidence type="ECO:0000255" key="1">
    <source>
        <dbReference type="HAMAP-Rule" id="MF_01007"/>
    </source>
</evidence>
<proteinExistence type="inferred from homology"/>
<organism>
    <name type="scientific">Oleidesulfovibrio alaskensis (strain ATCC BAA-1058 / DSM 17464 / G20)</name>
    <name type="common">Desulfovibrio alaskensis</name>
    <dbReference type="NCBI Taxonomy" id="207559"/>
    <lineage>
        <taxon>Bacteria</taxon>
        <taxon>Pseudomonadati</taxon>
        <taxon>Thermodesulfobacteriota</taxon>
        <taxon>Desulfovibrionia</taxon>
        <taxon>Desulfovibrionales</taxon>
        <taxon>Desulfovibrionaceae</taxon>
        <taxon>Oleidesulfovibrio</taxon>
    </lineage>
</organism>
<reference key="1">
    <citation type="journal article" date="2011" name="J. Bacteriol.">
        <title>Complete genome sequence and updated annotation of Desulfovibrio alaskensis G20.</title>
        <authorList>
            <person name="Hauser L.J."/>
            <person name="Land M.L."/>
            <person name="Brown S.D."/>
            <person name="Larimer F."/>
            <person name="Keller K.L."/>
            <person name="Rapp-Giles B.J."/>
            <person name="Price M.N."/>
            <person name="Lin M."/>
            <person name="Bruce D.C."/>
            <person name="Detter J.C."/>
            <person name="Tapia R."/>
            <person name="Han C.S."/>
            <person name="Goodwin L.A."/>
            <person name="Cheng J.F."/>
            <person name="Pitluck S."/>
            <person name="Copeland A."/>
            <person name="Lucas S."/>
            <person name="Nolan M."/>
            <person name="Lapidus A.L."/>
            <person name="Palumbo A.V."/>
            <person name="Wall J.D."/>
        </authorList>
    </citation>
    <scope>NUCLEOTIDE SEQUENCE [LARGE SCALE GENOMIC DNA]</scope>
    <source>
        <strain>ATCC BAA-1058 / DSM 17464 / G20</strain>
    </source>
</reference>
<dbReference type="EC" id="2.1.1.199" evidence="1"/>
<dbReference type="EMBL" id="CP000112">
    <property type="protein sequence ID" value="ABB37835.1"/>
    <property type="molecule type" value="Genomic_DNA"/>
</dbReference>
<dbReference type="RefSeq" id="WP_011367072.1">
    <property type="nucleotide sequence ID" value="NC_007519.1"/>
</dbReference>
<dbReference type="SMR" id="Q313R1"/>
<dbReference type="STRING" id="207559.Dde_1034"/>
<dbReference type="KEGG" id="dde:Dde_1034"/>
<dbReference type="eggNOG" id="COG0275">
    <property type="taxonomic scope" value="Bacteria"/>
</dbReference>
<dbReference type="HOGENOM" id="CLU_038422_2_0_7"/>
<dbReference type="Proteomes" id="UP000002710">
    <property type="component" value="Chromosome"/>
</dbReference>
<dbReference type="GO" id="GO:0005737">
    <property type="term" value="C:cytoplasm"/>
    <property type="evidence" value="ECO:0007669"/>
    <property type="project" value="UniProtKB-SubCell"/>
</dbReference>
<dbReference type="GO" id="GO:0071424">
    <property type="term" value="F:rRNA (cytosine-N4-)-methyltransferase activity"/>
    <property type="evidence" value="ECO:0007669"/>
    <property type="project" value="UniProtKB-UniRule"/>
</dbReference>
<dbReference type="GO" id="GO:0070475">
    <property type="term" value="P:rRNA base methylation"/>
    <property type="evidence" value="ECO:0007669"/>
    <property type="project" value="UniProtKB-UniRule"/>
</dbReference>
<dbReference type="Gene3D" id="1.10.150.170">
    <property type="entry name" value="Putative methyltransferase TM0872, insert domain"/>
    <property type="match status" value="1"/>
</dbReference>
<dbReference type="Gene3D" id="3.40.50.150">
    <property type="entry name" value="Vaccinia Virus protein VP39"/>
    <property type="match status" value="1"/>
</dbReference>
<dbReference type="HAMAP" id="MF_01007">
    <property type="entry name" value="16SrRNA_methyltr_H"/>
    <property type="match status" value="1"/>
</dbReference>
<dbReference type="InterPro" id="IPR002903">
    <property type="entry name" value="RsmH"/>
</dbReference>
<dbReference type="InterPro" id="IPR023397">
    <property type="entry name" value="SAM-dep_MeTrfase_MraW_recog"/>
</dbReference>
<dbReference type="InterPro" id="IPR029063">
    <property type="entry name" value="SAM-dependent_MTases_sf"/>
</dbReference>
<dbReference type="NCBIfam" id="TIGR00006">
    <property type="entry name" value="16S rRNA (cytosine(1402)-N(4))-methyltransferase RsmH"/>
    <property type="match status" value="1"/>
</dbReference>
<dbReference type="PANTHER" id="PTHR11265:SF0">
    <property type="entry name" value="12S RRNA N4-METHYLCYTIDINE METHYLTRANSFERASE"/>
    <property type="match status" value="1"/>
</dbReference>
<dbReference type="PANTHER" id="PTHR11265">
    <property type="entry name" value="S-ADENOSYL-METHYLTRANSFERASE MRAW"/>
    <property type="match status" value="1"/>
</dbReference>
<dbReference type="Pfam" id="PF01795">
    <property type="entry name" value="Methyltransf_5"/>
    <property type="match status" value="1"/>
</dbReference>
<dbReference type="PIRSF" id="PIRSF004486">
    <property type="entry name" value="MraW"/>
    <property type="match status" value="1"/>
</dbReference>
<dbReference type="SUPFAM" id="SSF81799">
    <property type="entry name" value="Putative methyltransferase TM0872, insert domain"/>
    <property type="match status" value="1"/>
</dbReference>
<dbReference type="SUPFAM" id="SSF53335">
    <property type="entry name" value="S-adenosyl-L-methionine-dependent methyltransferases"/>
    <property type="match status" value="1"/>
</dbReference>